<evidence type="ECO:0000255" key="1">
    <source>
        <dbReference type="HAMAP-Rule" id="MF_00318"/>
    </source>
</evidence>
<sequence length="429" mass="45139">MAKIVDIKGREVLDSRGNPTVEADVILEGGIVGSACAPSGASTGSREALELRDGDKSRYLGKGVLKAVANINGPIRDLLLGKDATDQQALDRAMIELDGTENKAKLGANAILAVSLAAAKAAAQAKGVPLYAHIADLNGTPGVYSMPVPMMNIINGGEHADNNVDIQEFMVQPVGAKNFADALRMGAEIFHHLKAVLKARGLNTAVGDEGGFAPNLASNEDALAAIAEAVANAGYKLGDDVTLALDCASSEFFKDGKYDLEGEGKVFDAAGFADYLAGLTQRYPIISIEDGMDESDWAGWKVLTDKIGAKVQLVGDDLFVTNTKILKRGIDEKIGNSILIKFNQIGSLTETLEAIQMAKAAGFTAVISHRSGETEDSTIADLAVGTAAGQIKTGSLCRSDRVSKYNQLLRIEEQLGGKAPYKGRAEFRG</sequence>
<dbReference type="EC" id="4.2.1.11" evidence="1"/>
<dbReference type="EMBL" id="CP000680">
    <property type="protein sequence ID" value="ABP85787.1"/>
    <property type="molecule type" value="Genomic_DNA"/>
</dbReference>
<dbReference type="SMR" id="A4XWS1"/>
<dbReference type="STRING" id="399739.Pmen_3033"/>
<dbReference type="KEGG" id="pmy:Pmen_3033"/>
<dbReference type="PATRIC" id="fig|399739.8.peg.3079"/>
<dbReference type="eggNOG" id="COG0148">
    <property type="taxonomic scope" value="Bacteria"/>
</dbReference>
<dbReference type="HOGENOM" id="CLU_031223_2_1_6"/>
<dbReference type="OrthoDB" id="9804716at2"/>
<dbReference type="UniPathway" id="UPA00109">
    <property type="reaction ID" value="UER00187"/>
</dbReference>
<dbReference type="GO" id="GO:0009986">
    <property type="term" value="C:cell surface"/>
    <property type="evidence" value="ECO:0007669"/>
    <property type="project" value="UniProtKB-SubCell"/>
</dbReference>
<dbReference type="GO" id="GO:0005576">
    <property type="term" value="C:extracellular region"/>
    <property type="evidence" value="ECO:0007669"/>
    <property type="project" value="UniProtKB-SubCell"/>
</dbReference>
<dbReference type="GO" id="GO:0000015">
    <property type="term" value="C:phosphopyruvate hydratase complex"/>
    <property type="evidence" value="ECO:0007669"/>
    <property type="project" value="InterPro"/>
</dbReference>
<dbReference type="GO" id="GO:0000287">
    <property type="term" value="F:magnesium ion binding"/>
    <property type="evidence" value="ECO:0007669"/>
    <property type="project" value="UniProtKB-UniRule"/>
</dbReference>
<dbReference type="GO" id="GO:0004634">
    <property type="term" value="F:phosphopyruvate hydratase activity"/>
    <property type="evidence" value="ECO:0007669"/>
    <property type="project" value="UniProtKB-UniRule"/>
</dbReference>
<dbReference type="GO" id="GO:0006096">
    <property type="term" value="P:glycolytic process"/>
    <property type="evidence" value="ECO:0007669"/>
    <property type="project" value="UniProtKB-UniRule"/>
</dbReference>
<dbReference type="CDD" id="cd03313">
    <property type="entry name" value="enolase"/>
    <property type="match status" value="1"/>
</dbReference>
<dbReference type="FunFam" id="3.20.20.120:FF:000001">
    <property type="entry name" value="Enolase"/>
    <property type="match status" value="1"/>
</dbReference>
<dbReference type="FunFam" id="3.30.390.10:FF:000001">
    <property type="entry name" value="Enolase"/>
    <property type="match status" value="1"/>
</dbReference>
<dbReference type="Gene3D" id="3.20.20.120">
    <property type="entry name" value="Enolase-like C-terminal domain"/>
    <property type="match status" value="1"/>
</dbReference>
<dbReference type="Gene3D" id="3.30.390.10">
    <property type="entry name" value="Enolase-like, N-terminal domain"/>
    <property type="match status" value="1"/>
</dbReference>
<dbReference type="HAMAP" id="MF_00318">
    <property type="entry name" value="Enolase"/>
    <property type="match status" value="1"/>
</dbReference>
<dbReference type="InterPro" id="IPR000941">
    <property type="entry name" value="Enolase"/>
</dbReference>
<dbReference type="InterPro" id="IPR036849">
    <property type="entry name" value="Enolase-like_C_sf"/>
</dbReference>
<dbReference type="InterPro" id="IPR029017">
    <property type="entry name" value="Enolase-like_N"/>
</dbReference>
<dbReference type="InterPro" id="IPR020810">
    <property type="entry name" value="Enolase_C"/>
</dbReference>
<dbReference type="InterPro" id="IPR020809">
    <property type="entry name" value="Enolase_CS"/>
</dbReference>
<dbReference type="InterPro" id="IPR020811">
    <property type="entry name" value="Enolase_N"/>
</dbReference>
<dbReference type="NCBIfam" id="TIGR01060">
    <property type="entry name" value="eno"/>
    <property type="match status" value="1"/>
</dbReference>
<dbReference type="PANTHER" id="PTHR11902">
    <property type="entry name" value="ENOLASE"/>
    <property type="match status" value="1"/>
</dbReference>
<dbReference type="PANTHER" id="PTHR11902:SF1">
    <property type="entry name" value="ENOLASE"/>
    <property type="match status" value="1"/>
</dbReference>
<dbReference type="Pfam" id="PF00113">
    <property type="entry name" value="Enolase_C"/>
    <property type="match status" value="1"/>
</dbReference>
<dbReference type="Pfam" id="PF03952">
    <property type="entry name" value="Enolase_N"/>
    <property type="match status" value="1"/>
</dbReference>
<dbReference type="PIRSF" id="PIRSF001400">
    <property type="entry name" value="Enolase"/>
    <property type="match status" value="1"/>
</dbReference>
<dbReference type="PRINTS" id="PR00148">
    <property type="entry name" value="ENOLASE"/>
</dbReference>
<dbReference type="SFLD" id="SFLDS00001">
    <property type="entry name" value="Enolase"/>
    <property type="match status" value="1"/>
</dbReference>
<dbReference type="SFLD" id="SFLDF00002">
    <property type="entry name" value="enolase"/>
    <property type="match status" value="1"/>
</dbReference>
<dbReference type="SMART" id="SM01192">
    <property type="entry name" value="Enolase_C"/>
    <property type="match status" value="1"/>
</dbReference>
<dbReference type="SMART" id="SM01193">
    <property type="entry name" value="Enolase_N"/>
    <property type="match status" value="1"/>
</dbReference>
<dbReference type="SUPFAM" id="SSF51604">
    <property type="entry name" value="Enolase C-terminal domain-like"/>
    <property type="match status" value="1"/>
</dbReference>
<dbReference type="SUPFAM" id="SSF54826">
    <property type="entry name" value="Enolase N-terminal domain-like"/>
    <property type="match status" value="1"/>
</dbReference>
<dbReference type="PROSITE" id="PS00164">
    <property type="entry name" value="ENOLASE"/>
    <property type="match status" value="1"/>
</dbReference>
<feature type="chain" id="PRO_1000019239" description="Enolase">
    <location>
        <begin position="1"/>
        <end position="429"/>
    </location>
</feature>
<feature type="active site" description="Proton donor" evidence="1">
    <location>
        <position position="209"/>
    </location>
</feature>
<feature type="active site" description="Proton acceptor" evidence="1">
    <location>
        <position position="341"/>
    </location>
</feature>
<feature type="binding site" evidence="1">
    <location>
        <position position="167"/>
    </location>
    <ligand>
        <name>(2R)-2-phosphoglycerate</name>
        <dbReference type="ChEBI" id="CHEBI:58289"/>
    </ligand>
</feature>
<feature type="binding site" evidence="1">
    <location>
        <position position="246"/>
    </location>
    <ligand>
        <name>Mg(2+)</name>
        <dbReference type="ChEBI" id="CHEBI:18420"/>
    </ligand>
</feature>
<feature type="binding site" evidence="1">
    <location>
        <position position="289"/>
    </location>
    <ligand>
        <name>Mg(2+)</name>
        <dbReference type="ChEBI" id="CHEBI:18420"/>
    </ligand>
</feature>
<feature type="binding site" evidence="1">
    <location>
        <position position="316"/>
    </location>
    <ligand>
        <name>Mg(2+)</name>
        <dbReference type="ChEBI" id="CHEBI:18420"/>
    </ligand>
</feature>
<feature type="binding site" evidence="1">
    <location>
        <position position="341"/>
    </location>
    <ligand>
        <name>(2R)-2-phosphoglycerate</name>
        <dbReference type="ChEBI" id="CHEBI:58289"/>
    </ligand>
</feature>
<feature type="binding site" evidence="1">
    <location>
        <position position="370"/>
    </location>
    <ligand>
        <name>(2R)-2-phosphoglycerate</name>
        <dbReference type="ChEBI" id="CHEBI:58289"/>
    </ligand>
</feature>
<feature type="binding site" evidence="1">
    <location>
        <position position="371"/>
    </location>
    <ligand>
        <name>(2R)-2-phosphoglycerate</name>
        <dbReference type="ChEBI" id="CHEBI:58289"/>
    </ligand>
</feature>
<feature type="binding site" evidence="1">
    <location>
        <position position="392"/>
    </location>
    <ligand>
        <name>(2R)-2-phosphoglycerate</name>
        <dbReference type="ChEBI" id="CHEBI:58289"/>
    </ligand>
</feature>
<proteinExistence type="inferred from homology"/>
<protein>
    <recommendedName>
        <fullName evidence="1">Enolase</fullName>
        <ecNumber evidence="1">4.2.1.11</ecNumber>
    </recommendedName>
    <alternativeName>
        <fullName evidence="1">2-phospho-D-glycerate hydro-lyase</fullName>
    </alternativeName>
    <alternativeName>
        <fullName evidence="1">2-phosphoglycerate dehydratase</fullName>
    </alternativeName>
</protein>
<organism>
    <name type="scientific">Ectopseudomonas mendocina (strain ymp)</name>
    <name type="common">Pseudomonas mendocina</name>
    <dbReference type="NCBI Taxonomy" id="399739"/>
    <lineage>
        <taxon>Bacteria</taxon>
        <taxon>Pseudomonadati</taxon>
        <taxon>Pseudomonadota</taxon>
        <taxon>Gammaproteobacteria</taxon>
        <taxon>Pseudomonadales</taxon>
        <taxon>Pseudomonadaceae</taxon>
        <taxon>Ectopseudomonas</taxon>
    </lineage>
</organism>
<reference key="1">
    <citation type="submission" date="2007-04" db="EMBL/GenBank/DDBJ databases">
        <title>Complete sequence of Pseudomonas mendocina ymp.</title>
        <authorList>
            <consortium name="US DOE Joint Genome Institute"/>
            <person name="Copeland A."/>
            <person name="Lucas S."/>
            <person name="Lapidus A."/>
            <person name="Barry K."/>
            <person name="Glavina del Rio T."/>
            <person name="Dalin E."/>
            <person name="Tice H."/>
            <person name="Pitluck S."/>
            <person name="Kiss H."/>
            <person name="Brettin T."/>
            <person name="Detter J.C."/>
            <person name="Bruce D."/>
            <person name="Han C."/>
            <person name="Schmutz J."/>
            <person name="Larimer F."/>
            <person name="Land M."/>
            <person name="Hauser L."/>
            <person name="Kyrpides N."/>
            <person name="Mikhailova N."/>
            <person name="Hersman L."/>
            <person name="Dubois J."/>
            <person name="Maurice P."/>
            <person name="Richardson P."/>
        </authorList>
    </citation>
    <scope>NUCLEOTIDE SEQUENCE [LARGE SCALE GENOMIC DNA]</scope>
    <source>
        <strain>ymp</strain>
    </source>
</reference>
<accession>A4XWS1</accession>
<gene>
    <name evidence="1" type="primary">eno</name>
    <name type="ordered locus">Pmen_3033</name>
</gene>
<name>ENO_ECTM1</name>
<keyword id="KW-0963">Cytoplasm</keyword>
<keyword id="KW-0324">Glycolysis</keyword>
<keyword id="KW-0456">Lyase</keyword>
<keyword id="KW-0460">Magnesium</keyword>
<keyword id="KW-0479">Metal-binding</keyword>
<keyword id="KW-0964">Secreted</keyword>
<comment type="function">
    <text evidence="1">Catalyzes the reversible conversion of 2-phosphoglycerate (2-PG) into phosphoenolpyruvate (PEP). It is essential for the degradation of carbohydrates via glycolysis.</text>
</comment>
<comment type="catalytic activity">
    <reaction evidence="1">
        <text>(2R)-2-phosphoglycerate = phosphoenolpyruvate + H2O</text>
        <dbReference type="Rhea" id="RHEA:10164"/>
        <dbReference type="ChEBI" id="CHEBI:15377"/>
        <dbReference type="ChEBI" id="CHEBI:58289"/>
        <dbReference type="ChEBI" id="CHEBI:58702"/>
        <dbReference type="EC" id="4.2.1.11"/>
    </reaction>
</comment>
<comment type="cofactor">
    <cofactor evidence="1">
        <name>Mg(2+)</name>
        <dbReference type="ChEBI" id="CHEBI:18420"/>
    </cofactor>
    <text evidence="1">Binds a second Mg(2+) ion via substrate during catalysis.</text>
</comment>
<comment type="pathway">
    <text evidence="1">Carbohydrate degradation; glycolysis; pyruvate from D-glyceraldehyde 3-phosphate: step 4/5.</text>
</comment>
<comment type="subunit">
    <text evidence="1">Component of the RNA degradosome, a multiprotein complex involved in RNA processing and mRNA degradation.</text>
</comment>
<comment type="subcellular location">
    <subcellularLocation>
        <location evidence="1">Cytoplasm</location>
    </subcellularLocation>
    <subcellularLocation>
        <location evidence="1">Secreted</location>
    </subcellularLocation>
    <subcellularLocation>
        <location evidence="1">Cell surface</location>
    </subcellularLocation>
    <text evidence="1">Fractions of enolase are present in both the cytoplasm and on the cell surface.</text>
</comment>
<comment type="similarity">
    <text evidence="1">Belongs to the enolase family.</text>
</comment>